<gene>
    <name type="primary">murP</name>
    <name type="ordered locus">VV2_1142</name>
</gene>
<feature type="chain" id="PRO_0000248963" description="PTS system N-acetylmuramic acid-specific EIIBC component">
    <location>
        <begin position="1"/>
        <end position="486"/>
    </location>
</feature>
<feature type="transmembrane region" description="Helical" evidence="3">
    <location>
        <begin position="129"/>
        <end position="149"/>
    </location>
</feature>
<feature type="transmembrane region" description="Helical" evidence="3">
    <location>
        <begin position="170"/>
        <end position="190"/>
    </location>
</feature>
<feature type="transmembrane region" description="Helical" evidence="3">
    <location>
        <begin position="196"/>
        <end position="216"/>
    </location>
</feature>
<feature type="transmembrane region" description="Helical" evidence="3">
    <location>
        <begin position="230"/>
        <end position="250"/>
    </location>
</feature>
<feature type="transmembrane region" description="Helical" evidence="3">
    <location>
        <begin position="268"/>
        <end position="288"/>
    </location>
</feature>
<feature type="transmembrane region" description="Helical" evidence="3">
    <location>
        <begin position="312"/>
        <end position="332"/>
    </location>
</feature>
<feature type="transmembrane region" description="Helical" evidence="3">
    <location>
        <begin position="347"/>
        <end position="367"/>
    </location>
</feature>
<feature type="transmembrane region" description="Helical" evidence="3">
    <location>
        <begin position="381"/>
        <end position="401"/>
    </location>
</feature>
<feature type="transmembrane region" description="Helical" evidence="3">
    <location>
        <begin position="411"/>
        <end position="431"/>
    </location>
</feature>
<feature type="transmembrane region" description="Helical" evidence="3">
    <location>
        <begin position="453"/>
        <end position="473"/>
    </location>
</feature>
<feature type="domain" description="PTS EIIB type-1" evidence="2">
    <location>
        <begin position="1"/>
        <end position="89"/>
    </location>
</feature>
<feature type="domain" description="PTS EIIC type-1" evidence="3">
    <location>
        <begin position="127"/>
        <end position="486"/>
    </location>
</feature>
<feature type="active site" description="Phosphocysteine intermediate; for EIIB activity" evidence="2">
    <location>
        <position position="28"/>
    </location>
</feature>
<proteinExistence type="inferred from homology"/>
<accession>Q8D4Z3</accession>
<organism>
    <name type="scientific">Vibrio vulnificus (strain CMCP6)</name>
    <dbReference type="NCBI Taxonomy" id="216895"/>
    <lineage>
        <taxon>Bacteria</taxon>
        <taxon>Pseudomonadati</taxon>
        <taxon>Pseudomonadota</taxon>
        <taxon>Gammaproteobacteria</taxon>
        <taxon>Vibrionales</taxon>
        <taxon>Vibrionaceae</taxon>
        <taxon>Vibrio</taxon>
    </lineage>
</organism>
<keyword id="KW-0997">Cell inner membrane</keyword>
<keyword id="KW-1003">Cell membrane</keyword>
<keyword id="KW-0418">Kinase</keyword>
<keyword id="KW-0472">Membrane</keyword>
<keyword id="KW-0598">Phosphotransferase system</keyword>
<keyword id="KW-0762">Sugar transport</keyword>
<keyword id="KW-0808">Transferase</keyword>
<keyword id="KW-0812">Transmembrane</keyword>
<keyword id="KW-1133">Transmembrane helix</keyword>
<keyword id="KW-0813">Transport</keyword>
<protein>
    <recommendedName>
        <fullName evidence="1">PTS system N-acetylmuramic acid-specific EIIBC component</fullName>
    </recommendedName>
    <alternativeName>
        <fullName evidence="1">EIIBC-MurNAc</fullName>
    </alternativeName>
    <domain>
        <recommendedName>
            <fullName evidence="1">N-acetylmuramic acid-specific phosphotransferase enzyme IIB component</fullName>
            <ecNumber evidence="1">2.7.1.192</ecNumber>
        </recommendedName>
        <alternativeName>
            <fullName evidence="1">PTS system N-acetylmuramic acid-specific EIIB component</fullName>
        </alternativeName>
    </domain>
    <domain>
        <recommendedName>
            <fullName evidence="1">N-acetylmuramic acid permease IIC component</fullName>
        </recommendedName>
        <alternativeName>
            <fullName evidence="1">PTS system N-acetylmuramic acid-specific EIIC component</fullName>
        </alternativeName>
    </domain>
</protein>
<name>PTYBC_VIBVU</name>
<sequence>MAKITQTMISQLLAAVGGSSNVSKCGNCMTRLRLTLANNGVADQAVIKQIPGVMGVVESDEQFQIILGPGKAQQAAELMNKLIESVINGDVQEQAIASDTNDLSSVAAEQKKQMKSKQTSAVQRFLSKFATIFTPLIPGFIAAGLLLGFATLLEQMFVLEQTPSQFMLDLIAYMKVFGKGLFAFLSILIGYNAQQAFGGSGVNGAILASLFVLGYNPDATSGIYSGMSEFFGYTIDPRGNIIGVLLAAIIGAQVERKVREYMPDDLDMILTSVVTLLIMGVITFVVIMPIGGELFKGMSWLFLNLNDNPLGAAILAGLFLISVVFGIHQGFVPVYFALMEAQGFNSLFPILAMAGGGQVGASLALYFKAKKDAVLRTQVKGAIIPGILGIGEPLIYGVTLPRVKPFVTACIGGAAGGFFIGLVSYLGLPVGLNTVFGPSGIVAIPLMTSHSGIFAGMAVFVVGLLISYVVGFLATYFFGSKDVDLS</sequence>
<dbReference type="EC" id="2.7.1.192" evidence="1"/>
<dbReference type="EMBL" id="AE016796">
    <property type="protein sequence ID" value="AAO08043.2"/>
    <property type="molecule type" value="Genomic_DNA"/>
</dbReference>
<dbReference type="RefSeq" id="WP_011082038.1">
    <property type="nucleotide sequence ID" value="NC_004460.2"/>
</dbReference>
<dbReference type="SMR" id="Q8D4Z3"/>
<dbReference type="KEGG" id="vvu:VV2_1142"/>
<dbReference type="HOGENOM" id="CLU_012312_2_0_6"/>
<dbReference type="Proteomes" id="UP000002275">
    <property type="component" value="Chromosome 2"/>
</dbReference>
<dbReference type="GO" id="GO:0005886">
    <property type="term" value="C:plasma membrane"/>
    <property type="evidence" value="ECO:0007669"/>
    <property type="project" value="UniProtKB-SubCell"/>
</dbReference>
<dbReference type="GO" id="GO:0016301">
    <property type="term" value="F:kinase activity"/>
    <property type="evidence" value="ECO:0007669"/>
    <property type="project" value="UniProtKB-KW"/>
</dbReference>
<dbReference type="GO" id="GO:0008982">
    <property type="term" value="F:protein-N(PI)-phosphohistidine-sugar phosphotransferase activity"/>
    <property type="evidence" value="ECO:0007669"/>
    <property type="project" value="InterPro"/>
</dbReference>
<dbReference type="GO" id="GO:0090588">
    <property type="term" value="F:protein-phosphocysteine-N-acetylmuramate phosphotransferase system transporter activity"/>
    <property type="evidence" value="ECO:0007669"/>
    <property type="project" value="TreeGrafter"/>
</dbReference>
<dbReference type="GO" id="GO:0009401">
    <property type="term" value="P:phosphoenolpyruvate-dependent sugar phosphotransferase system"/>
    <property type="evidence" value="ECO:0007669"/>
    <property type="project" value="UniProtKB-KW"/>
</dbReference>
<dbReference type="CDD" id="cd00212">
    <property type="entry name" value="PTS_IIB_glc"/>
    <property type="match status" value="1"/>
</dbReference>
<dbReference type="FunFam" id="3.30.1360.60:FF:000001">
    <property type="entry name" value="PTS system glucose-specific IIBC component PtsG"/>
    <property type="match status" value="1"/>
</dbReference>
<dbReference type="Gene3D" id="3.30.1360.60">
    <property type="entry name" value="Glucose permease domain IIB"/>
    <property type="match status" value="1"/>
</dbReference>
<dbReference type="InterPro" id="IPR036878">
    <property type="entry name" value="Glu_permease_IIB"/>
</dbReference>
<dbReference type="InterPro" id="IPR018113">
    <property type="entry name" value="PTrfase_EIIB_Cys"/>
</dbReference>
<dbReference type="InterPro" id="IPR003352">
    <property type="entry name" value="PTS_EIIC"/>
</dbReference>
<dbReference type="InterPro" id="IPR013013">
    <property type="entry name" value="PTS_EIIC_1"/>
</dbReference>
<dbReference type="InterPro" id="IPR001996">
    <property type="entry name" value="PTS_IIB_1"/>
</dbReference>
<dbReference type="InterPro" id="IPR050558">
    <property type="entry name" value="PTS_Sugar-Specific_Components"/>
</dbReference>
<dbReference type="NCBIfam" id="NF007152">
    <property type="entry name" value="PRK09586.1"/>
    <property type="match status" value="1"/>
</dbReference>
<dbReference type="PANTHER" id="PTHR30175">
    <property type="entry name" value="PHOSPHOTRANSFERASE SYSTEM TRANSPORT PROTEIN"/>
    <property type="match status" value="1"/>
</dbReference>
<dbReference type="PANTHER" id="PTHR30175:SF3">
    <property type="entry name" value="PTS SYSTEM N-ACETYLMURAMIC ACID-SPECIFIC EIIBC COMPONENT"/>
    <property type="match status" value="1"/>
</dbReference>
<dbReference type="Pfam" id="PF00367">
    <property type="entry name" value="PTS_EIIB"/>
    <property type="match status" value="1"/>
</dbReference>
<dbReference type="Pfam" id="PF02378">
    <property type="entry name" value="PTS_EIIC"/>
    <property type="match status" value="1"/>
</dbReference>
<dbReference type="SUPFAM" id="SSF55604">
    <property type="entry name" value="Glucose permease domain IIB"/>
    <property type="match status" value="1"/>
</dbReference>
<dbReference type="PROSITE" id="PS51098">
    <property type="entry name" value="PTS_EIIB_TYPE_1"/>
    <property type="match status" value="1"/>
</dbReference>
<dbReference type="PROSITE" id="PS01035">
    <property type="entry name" value="PTS_EIIB_TYPE_1_CYS"/>
    <property type="match status" value="1"/>
</dbReference>
<dbReference type="PROSITE" id="PS51103">
    <property type="entry name" value="PTS_EIIC_TYPE_1"/>
    <property type="match status" value="1"/>
</dbReference>
<reference key="1">
    <citation type="submission" date="2002-12" db="EMBL/GenBank/DDBJ databases">
        <title>Complete genome sequence of Vibrio vulnificus CMCP6.</title>
        <authorList>
            <person name="Rhee J.H."/>
            <person name="Kim S.Y."/>
            <person name="Chung S.S."/>
            <person name="Kim J.J."/>
            <person name="Moon Y.H."/>
            <person name="Jeong H."/>
            <person name="Choy H.E."/>
        </authorList>
    </citation>
    <scope>NUCLEOTIDE SEQUENCE [LARGE SCALE GENOMIC DNA]</scope>
    <source>
        <strain>CMCP6</strain>
    </source>
</reference>
<evidence type="ECO:0000250" key="1">
    <source>
        <dbReference type="UniProtKB" id="P77272"/>
    </source>
</evidence>
<evidence type="ECO:0000255" key="2">
    <source>
        <dbReference type="PROSITE-ProRule" id="PRU00421"/>
    </source>
</evidence>
<evidence type="ECO:0000255" key="3">
    <source>
        <dbReference type="PROSITE-ProRule" id="PRU00426"/>
    </source>
</evidence>
<comment type="function">
    <text evidence="1">The phosphoenolpyruvate-dependent sugar phosphotransferase system (sugar PTS), a major carbohydrate active transport system, catalyzes the phosphorylation of incoming sugar substrates concomitantly with their translocation across the cell membrane. This system is involved in N-acetylmuramic acid (MurNAc) transport, yielding cytoplasmic MurNAc-6-P. Is also able to take up anhydro-N-acetylmuramic acid (anhMurNAc), but cannot phosphorylate the carbon 6, probably because of the 1,6-anhydro ring.</text>
</comment>
<comment type="catalytic activity">
    <reaction evidence="1">
        <text>N-acetyl-beta-D-muramate(out) + N(pros)-phospho-L-histidyl-[protein] = N-acetyl-beta-D-muramate 6-phosphate(in) + L-histidyl-[protein]</text>
        <dbReference type="Rhea" id="RHEA:33399"/>
        <dbReference type="Rhea" id="RHEA-COMP:9745"/>
        <dbReference type="Rhea" id="RHEA-COMP:9746"/>
        <dbReference type="ChEBI" id="CHEBI:29979"/>
        <dbReference type="ChEBI" id="CHEBI:58721"/>
        <dbReference type="ChEBI" id="CHEBI:64837"/>
        <dbReference type="ChEBI" id="CHEBI:64848"/>
        <dbReference type="EC" id="2.7.1.192"/>
    </reaction>
</comment>
<comment type="subcellular location">
    <subcellularLocation>
        <location evidence="3">Cell inner membrane</location>
        <topology evidence="3">Multi-pass membrane protein</topology>
    </subcellularLocation>
</comment>
<comment type="domain">
    <text evidence="2">The EIIB domain is phosphorylated by phospho-EIIA on a cysteinyl or histidyl residue, depending on the transported sugar. Then, it transfers the phosphoryl group to the sugar substrate concomitantly with the sugar uptake processed by the EIIC domain.</text>
</comment>
<comment type="domain">
    <text evidence="3">The EIIC domain forms the PTS system translocation channel and contains the specific substrate-binding site.</text>
</comment>